<reference key="1">
    <citation type="journal article" date="2011" name="J. Bacteriol.">
        <title>Comparative genomics of 28 Salmonella enterica isolates: evidence for CRISPR-mediated adaptive sublineage evolution.</title>
        <authorList>
            <person name="Fricke W.F."/>
            <person name="Mammel M.K."/>
            <person name="McDermott P.F."/>
            <person name="Tartera C."/>
            <person name="White D.G."/>
            <person name="Leclerc J.E."/>
            <person name="Ravel J."/>
            <person name="Cebula T.A."/>
        </authorList>
    </citation>
    <scope>NUCLEOTIDE SEQUENCE [LARGE SCALE GENOMIC DNA]</scope>
    <source>
        <strain>CT_02021853</strain>
    </source>
</reference>
<evidence type="ECO:0000255" key="1">
    <source>
        <dbReference type="HAMAP-Rule" id="MF_00295"/>
    </source>
</evidence>
<name>METAS_SALDC</name>
<keyword id="KW-0012">Acyltransferase</keyword>
<keyword id="KW-0028">Amino-acid biosynthesis</keyword>
<keyword id="KW-0963">Cytoplasm</keyword>
<keyword id="KW-0486">Methionine biosynthesis</keyword>
<keyword id="KW-0808">Transferase</keyword>
<dbReference type="EC" id="2.3.1.46" evidence="1"/>
<dbReference type="EMBL" id="CP001144">
    <property type="protein sequence ID" value="ACH74728.1"/>
    <property type="molecule type" value="Genomic_DNA"/>
</dbReference>
<dbReference type="SMR" id="B5FQM3"/>
<dbReference type="KEGG" id="sed:SeD_A4591"/>
<dbReference type="HOGENOM" id="CLU_057851_0_1_6"/>
<dbReference type="UniPathway" id="UPA00051">
    <property type="reaction ID" value="UER00075"/>
</dbReference>
<dbReference type="Proteomes" id="UP000008322">
    <property type="component" value="Chromosome"/>
</dbReference>
<dbReference type="GO" id="GO:0005737">
    <property type="term" value="C:cytoplasm"/>
    <property type="evidence" value="ECO:0007669"/>
    <property type="project" value="UniProtKB-SubCell"/>
</dbReference>
<dbReference type="GO" id="GO:0004414">
    <property type="term" value="F:homoserine O-acetyltransferase activity"/>
    <property type="evidence" value="ECO:0007669"/>
    <property type="project" value="UniProtKB-UniRule"/>
</dbReference>
<dbReference type="GO" id="GO:0008899">
    <property type="term" value="F:homoserine O-succinyltransferase activity"/>
    <property type="evidence" value="ECO:0007669"/>
    <property type="project" value="UniProtKB-EC"/>
</dbReference>
<dbReference type="GO" id="GO:0019281">
    <property type="term" value="P:L-methionine biosynthetic process from homoserine via O-succinyl-L-homoserine and cystathionine"/>
    <property type="evidence" value="ECO:0007669"/>
    <property type="project" value="InterPro"/>
</dbReference>
<dbReference type="CDD" id="cd03131">
    <property type="entry name" value="GATase1_HTS"/>
    <property type="match status" value="1"/>
</dbReference>
<dbReference type="FunFam" id="3.40.50.880:FF:000004">
    <property type="entry name" value="Homoserine O-succinyltransferase"/>
    <property type="match status" value="1"/>
</dbReference>
<dbReference type="Gene3D" id="3.40.50.880">
    <property type="match status" value="1"/>
</dbReference>
<dbReference type="HAMAP" id="MF_00295">
    <property type="entry name" value="MetA_acyltransf"/>
    <property type="match status" value="1"/>
</dbReference>
<dbReference type="InterPro" id="IPR029062">
    <property type="entry name" value="Class_I_gatase-like"/>
</dbReference>
<dbReference type="InterPro" id="IPR005697">
    <property type="entry name" value="HST_MetA"/>
</dbReference>
<dbReference type="InterPro" id="IPR033752">
    <property type="entry name" value="MetA_family"/>
</dbReference>
<dbReference type="NCBIfam" id="TIGR01001">
    <property type="entry name" value="metA"/>
    <property type="match status" value="1"/>
</dbReference>
<dbReference type="PANTHER" id="PTHR20919">
    <property type="entry name" value="HOMOSERINE O-SUCCINYLTRANSFERASE"/>
    <property type="match status" value="1"/>
</dbReference>
<dbReference type="PANTHER" id="PTHR20919:SF0">
    <property type="entry name" value="HOMOSERINE O-SUCCINYLTRANSFERASE"/>
    <property type="match status" value="1"/>
</dbReference>
<dbReference type="Pfam" id="PF04204">
    <property type="entry name" value="HTS"/>
    <property type="match status" value="1"/>
</dbReference>
<dbReference type="PIRSF" id="PIRSF000450">
    <property type="entry name" value="H_ser_succinyltr"/>
    <property type="match status" value="1"/>
</dbReference>
<dbReference type="SUPFAM" id="SSF52317">
    <property type="entry name" value="Class I glutamine amidotransferase-like"/>
    <property type="match status" value="1"/>
</dbReference>
<proteinExistence type="inferred from homology"/>
<sequence length="309" mass="35670">MPIRVLDELPAVNFLREENVFVMTTSRASGQEIRPLKVLILNLMPKKIETENQFLRLLSNSPLQVDIQLLRIDARESRNTPAEHLNNFYCNFDDICDQNFDGLIVTGAPLGLVEFNDVAYWPQIRQVLEWAKDHVTSTLFVCWAVQAALNILYGIPKQTRTDKLSGVYEHHILHPHALLTRGFDDSFLAPHSRYADFPAALIRDYTDLEILAETEEGDAYLFASKDKRIAFVTGHPEYDAHTLAGEYFRDVEAGLNPEVPYNYFPKNDPQNIPRATWRSHGNLLFTNWLNYYVYQITPYDLRHMNPTLD</sequence>
<accession>B5FQM3</accession>
<protein>
    <recommendedName>
        <fullName evidence="1">Homoserine O-succinyltransferase</fullName>
        <shortName evidence="1">HST</shortName>
        <ecNumber evidence="1">2.3.1.46</ecNumber>
    </recommendedName>
    <alternativeName>
        <fullName evidence="1">Homoserine transsuccinylase</fullName>
        <shortName evidence="1">HTS</shortName>
    </alternativeName>
</protein>
<gene>
    <name evidence="1" type="primary">metAS</name>
    <name type="ordered locus">SeD_A4591</name>
</gene>
<comment type="function">
    <text evidence="1">Transfers a succinyl group from succinyl-CoA to L-homoserine, forming succinyl-L-homoserine.</text>
</comment>
<comment type="catalytic activity">
    <reaction evidence="1">
        <text>L-homoserine + succinyl-CoA = O-succinyl-L-homoserine + CoA</text>
        <dbReference type="Rhea" id="RHEA:22008"/>
        <dbReference type="ChEBI" id="CHEBI:57287"/>
        <dbReference type="ChEBI" id="CHEBI:57292"/>
        <dbReference type="ChEBI" id="CHEBI:57476"/>
        <dbReference type="ChEBI" id="CHEBI:57661"/>
        <dbReference type="EC" id="2.3.1.46"/>
    </reaction>
</comment>
<comment type="pathway">
    <text evidence="1">Amino-acid biosynthesis; L-methionine biosynthesis via de novo pathway; O-succinyl-L-homoserine from L-homoserine: step 1/1.</text>
</comment>
<comment type="subunit">
    <text evidence="1">Homodimer.</text>
</comment>
<comment type="subcellular location">
    <subcellularLocation>
        <location evidence="1">Cytoplasm</location>
    </subcellularLocation>
</comment>
<comment type="similarity">
    <text evidence="1">Belongs to the MetA family.</text>
</comment>
<organism>
    <name type="scientific">Salmonella dublin (strain CT_02021853)</name>
    <dbReference type="NCBI Taxonomy" id="439851"/>
    <lineage>
        <taxon>Bacteria</taxon>
        <taxon>Pseudomonadati</taxon>
        <taxon>Pseudomonadota</taxon>
        <taxon>Gammaproteobacteria</taxon>
        <taxon>Enterobacterales</taxon>
        <taxon>Enterobacteriaceae</taxon>
        <taxon>Salmonella</taxon>
    </lineage>
</organism>
<feature type="chain" id="PRO_1000115188" description="Homoserine O-succinyltransferase">
    <location>
        <begin position="1"/>
        <end position="309"/>
    </location>
</feature>
<feature type="active site" description="Acyl-thioester intermediate" evidence="1">
    <location>
        <position position="142"/>
    </location>
</feature>
<feature type="active site" description="Proton acceptor" evidence="1">
    <location>
        <position position="235"/>
    </location>
</feature>
<feature type="active site" evidence="1">
    <location>
        <position position="237"/>
    </location>
</feature>
<feature type="binding site" evidence="1">
    <location>
        <position position="163"/>
    </location>
    <ligand>
        <name>substrate</name>
    </ligand>
</feature>
<feature type="binding site" evidence="1">
    <location>
        <position position="192"/>
    </location>
    <ligand>
        <name>substrate</name>
    </ligand>
</feature>
<feature type="binding site" evidence="1">
    <location>
        <position position="249"/>
    </location>
    <ligand>
        <name>substrate</name>
    </ligand>
</feature>
<feature type="site" description="Important for acyl-CoA specificity" evidence="1">
    <location>
        <position position="111"/>
    </location>
</feature>
<feature type="site" description="Important for substrate specificity" evidence="1">
    <location>
        <position position="192"/>
    </location>
</feature>